<dbReference type="EC" id="2.1.3.2" evidence="1"/>
<dbReference type="EMBL" id="CP000675">
    <property type="protein sequence ID" value="ABQ56626.1"/>
    <property type="molecule type" value="Genomic_DNA"/>
</dbReference>
<dbReference type="RefSeq" id="WP_011945753.1">
    <property type="nucleotide sequence ID" value="NZ_JAPMSS010000013.1"/>
</dbReference>
<dbReference type="SMR" id="A5IGX6"/>
<dbReference type="KEGG" id="lpc:LPC_2715"/>
<dbReference type="HOGENOM" id="CLU_043846_2_0_6"/>
<dbReference type="UniPathway" id="UPA00070">
    <property type="reaction ID" value="UER00116"/>
</dbReference>
<dbReference type="GO" id="GO:0005829">
    <property type="term" value="C:cytosol"/>
    <property type="evidence" value="ECO:0007669"/>
    <property type="project" value="TreeGrafter"/>
</dbReference>
<dbReference type="GO" id="GO:0016597">
    <property type="term" value="F:amino acid binding"/>
    <property type="evidence" value="ECO:0007669"/>
    <property type="project" value="InterPro"/>
</dbReference>
<dbReference type="GO" id="GO:0004070">
    <property type="term" value="F:aspartate carbamoyltransferase activity"/>
    <property type="evidence" value="ECO:0007669"/>
    <property type="project" value="UniProtKB-UniRule"/>
</dbReference>
<dbReference type="GO" id="GO:0006207">
    <property type="term" value="P:'de novo' pyrimidine nucleobase biosynthetic process"/>
    <property type="evidence" value="ECO:0007669"/>
    <property type="project" value="InterPro"/>
</dbReference>
<dbReference type="GO" id="GO:0044205">
    <property type="term" value="P:'de novo' UMP biosynthetic process"/>
    <property type="evidence" value="ECO:0007669"/>
    <property type="project" value="UniProtKB-UniRule"/>
</dbReference>
<dbReference type="GO" id="GO:0006520">
    <property type="term" value="P:amino acid metabolic process"/>
    <property type="evidence" value="ECO:0007669"/>
    <property type="project" value="InterPro"/>
</dbReference>
<dbReference type="Gene3D" id="3.40.50.1370">
    <property type="entry name" value="Aspartate/ornithine carbamoyltransferase"/>
    <property type="match status" value="2"/>
</dbReference>
<dbReference type="HAMAP" id="MF_00001">
    <property type="entry name" value="Asp_carb_tr"/>
    <property type="match status" value="1"/>
</dbReference>
<dbReference type="InterPro" id="IPR006132">
    <property type="entry name" value="Asp/Orn_carbamoyltranf_P-bd"/>
</dbReference>
<dbReference type="InterPro" id="IPR006130">
    <property type="entry name" value="Asp/Orn_carbamoylTrfase"/>
</dbReference>
<dbReference type="InterPro" id="IPR036901">
    <property type="entry name" value="Asp/Orn_carbamoylTrfase_sf"/>
</dbReference>
<dbReference type="InterPro" id="IPR002082">
    <property type="entry name" value="Asp_carbamoyltransf"/>
</dbReference>
<dbReference type="InterPro" id="IPR006131">
    <property type="entry name" value="Asp_carbamoyltransf_Asp/Orn-bd"/>
</dbReference>
<dbReference type="NCBIfam" id="TIGR00670">
    <property type="entry name" value="asp_carb_tr"/>
    <property type="match status" value="1"/>
</dbReference>
<dbReference type="NCBIfam" id="NF002032">
    <property type="entry name" value="PRK00856.1"/>
    <property type="match status" value="1"/>
</dbReference>
<dbReference type="PANTHER" id="PTHR45753:SF6">
    <property type="entry name" value="ASPARTATE CARBAMOYLTRANSFERASE"/>
    <property type="match status" value="1"/>
</dbReference>
<dbReference type="PANTHER" id="PTHR45753">
    <property type="entry name" value="ORNITHINE CARBAMOYLTRANSFERASE, MITOCHONDRIAL"/>
    <property type="match status" value="1"/>
</dbReference>
<dbReference type="Pfam" id="PF00185">
    <property type="entry name" value="OTCace"/>
    <property type="match status" value="1"/>
</dbReference>
<dbReference type="Pfam" id="PF02729">
    <property type="entry name" value="OTCace_N"/>
    <property type="match status" value="1"/>
</dbReference>
<dbReference type="PRINTS" id="PR00100">
    <property type="entry name" value="AOTCASE"/>
</dbReference>
<dbReference type="PRINTS" id="PR00101">
    <property type="entry name" value="ATCASE"/>
</dbReference>
<dbReference type="SUPFAM" id="SSF53671">
    <property type="entry name" value="Aspartate/ornithine carbamoyltransferase"/>
    <property type="match status" value="1"/>
</dbReference>
<dbReference type="PROSITE" id="PS00097">
    <property type="entry name" value="CARBAMOYLTRANSFERASE"/>
    <property type="match status" value="1"/>
</dbReference>
<sequence>MKHFLEISQLSSEQIESLLQRALYFKHTKQYPSYSQSIIANLFYENSTRTRISFELAERHLSMSVVNLDLQTSSETKGEAIEDTIRTLAAMGIQYFVIRHKQDGLQQNLANKLGDTVHIINAGDGTHAHPSQAILDMVTIVEQKKQLDKLKIAILGNIKHSRVANSFQCICSKLGVGELVLISPEIWQPSQVHFGRVTDNLNEGLEGADVIICLRVQRERLLQDDHLDLDFYRNNFALTQKSLSYAKPDAMVMHPGPMNRGVEIDSEVADGKQSCILQQVTNGVYARMAILESLIGS</sequence>
<evidence type="ECO:0000255" key="1">
    <source>
        <dbReference type="HAMAP-Rule" id="MF_00001"/>
    </source>
</evidence>
<gene>
    <name evidence="1" type="primary">pyrB</name>
    <name type="ordered locus">LPC_2715</name>
</gene>
<organism>
    <name type="scientific">Legionella pneumophila (strain Corby)</name>
    <dbReference type="NCBI Taxonomy" id="400673"/>
    <lineage>
        <taxon>Bacteria</taxon>
        <taxon>Pseudomonadati</taxon>
        <taxon>Pseudomonadota</taxon>
        <taxon>Gammaproteobacteria</taxon>
        <taxon>Legionellales</taxon>
        <taxon>Legionellaceae</taxon>
        <taxon>Legionella</taxon>
    </lineage>
</organism>
<proteinExistence type="inferred from homology"/>
<name>PYRB_LEGPC</name>
<comment type="function">
    <text evidence="1">Catalyzes the condensation of carbamoyl phosphate and aspartate to form carbamoyl aspartate and inorganic phosphate, the committed step in the de novo pyrimidine nucleotide biosynthesis pathway.</text>
</comment>
<comment type="catalytic activity">
    <reaction evidence="1">
        <text>carbamoyl phosphate + L-aspartate = N-carbamoyl-L-aspartate + phosphate + H(+)</text>
        <dbReference type="Rhea" id="RHEA:20013"/>
        <dbReference type="ChEBI" id="CHEBI:15378"/>
        <dbReference type="ChEBI" id="CHEBI:29991"/>
        <dbReference type="ChEBI" id="CHEBI:32814"/>
        <dbReference type="ChEBI" id="CHEBI:43474"/>
        <dbReference type="ChEBI" id="CHEBI:58228"/>
        <dbReference type="EC" id="2.1.3.2"/>
    </reaction>
</comment>
<comment type="pathway">
    <text evidence="1">Pyrimidine metabolism; UMP biosynthesis via de novo pathway; (S)-dihydroorotate from bicarbonate: step 2/3.</text>
</comment>
<comment type="subunit">
    <text evidence="1">Heterododecamer (2C3:3R2) of six catalytic PyrB chains organized as two trimers (C3), and six regulatory PyrI chains organized as three dimers (R2).</text>
</comment>
<comment type="similarity">
    <text evidence="1">Belongs to the aspartate/ornithine carbamoyltransferase superfamily. ATCase family.</text>
</comment>
<keyword id="KW-0665">Pyrimidine biosynthesis</keyword>
<keyword id="KW-0808">Transferase</keyword>
<protein>
    <recommendedName>
        <fullName evidence="1">Aspartate carbamoyltransferase catalytic subunit</fullName>
        <ecNumber evidence="1">2.1.3.2</ecNumber>
    </recommendedName>
    <alternativeName>
        <fullName evidence="1">Aspartate transcarbamylase</fullName>
        <shortName evidence="1">ATCase</shortName>
    </alternativeName>
</protein>
<reference key="1">
    <citation type="submission" date="2006-11" db="EMBL/GenBank/DDBJ databases">
        <title>Identification and characterization of a new conjugation/ type IVA secretion system (trb/tra) of L. pneumophila Corby localized on a mobile genomic island.</title>
        <authorList>
            <person name="Gloeckner G."/>
            <person name="Albert-Weissenberger C."/>
            <person name="Weinmann E."/>
            <person name="Jacobi S."/>
            <person name="Schunder E."/>
            <person name="Steinert M."/>
            <person name="Buchrieser C."/>
            <person name="Hacker J."/>
            <person name="Heuner K."/>
        </authorList>
    </citation>
    <scope>NUCLEOTIDE SEQUENCE [LARGE SCALE GENOMIC DNA]</scope>
    <source>
        <strain>Corby</strain>
    </source>
</reference>
<feature type="chain" id="PRO_1000000012" description="Aspartate carbamoyltransferase catalytic subunit">
    <location>
        <begin position="1"/>
        <end position="297"/>
    </location>
</feature>
<feature type="binding site" evidence="1">
    <location>
        <position position="49"/>
    </location>
    <ligand>
        <name>carbamoyl phosphate</name>
        <dbReference type="ChEBI" id="CHEBI:58228"/>
    </ligand>
</feature>
<feature type="binding site" evidence="1">
    <location>
        <position position="50"/>
    </location>
    <ligand>
        <name>carbamoyl phosphate</name>
        <dbReference type="ChEBI" id="CHEBI:58228"/>
    </ligand>
</feature>
<feature type="binding site" evidence="1">
    <location>
        <position position="77"/>
    </location>
    <ligand>
        <name>L-aspartate</name>
        <dbReference type="ChEBI" id="CHEBI:29991"/>
    </ligand>
</feature>
<feature type="binding site" evidence="1">
    <location>
        <position position="99"/>
    </location>
    <ligand>
        <name>carbamoyl phosphate</name>
        <dbReference type="ChEBI" id="CHEBI:58228"/>
    </ligand>
</feature>
<feature type="binding site" evidence="1">
    <location>
        <position position="129"/>
    </location>
    <ligand>
        <name>carbamoyl phosphate</name>
        <dbReference type="ChEBI" id="CHEBI:58228"/>
    </ligand>
</feature>
<feature type="binding site" evidence="1">
    <location>
        <position position="132"/>
    </location>
    <ligand>
        <name>carbamoyl phosphate</name>
        <dbReference type="ChEBI" id="CHEBI:58228"/>
    </ligand>
</feature>
<feature type="binding site" evidence="1">
    <location>
        <position position="162"/>
    </location>
    <ligand>
        <name>L-aspartate</name>
        <dbReference type="ChEBI" id="CHEBI:29991"/>
    </ligand>
</feature>
<feature type="binding site" evidence="1">
    <location>
        <position position="215"/>
    </location>
    <ligand>
        <name>L-aspartate</name>
        <dbReference type="ChEBI" id="CHEBI:29991"/>
    </ligand>
</feature>
<feature type="binding site" evidence="1">
    <location>
        <position position="256"/>
    </location>
    <ligand>
        <name>carbamoyl phosphate</name>
        <dbReference type="ChEBI" id="CHEBI:58228"/>
    </ligand>
</feature>
<feature type="binding site" evidence="1">
    <location>
        <position position="257"/>
    </location>
    <ligand>
        <name>carbamoyl phosphate</name>
        <dbReference type="ChEBI" id="CHEBI:58228"/>
    </ligand>
</feature>
<accession>A5IGX6</accession>